<evidence type="ECO:0000255" key="1">
    <source>
        <dbReference type="HAMAP-Rule" id="MF_00599"/>
    </source>
</evidence>
<keyword id="KW-0131">Cell cycle</keyword>
<keyword id="KW-0132">Cell division</keyword>
<keyword id="KW-0997">Cell inner membrane</keyword>
<keyword id="KW-1003">Cell membrane</keyword>
<keyword id="KW-0175">Coiled coil</keyword>
<keyword id="KW-0472">Membrane</keyword>
<keyword id="KW-0812">Transmembrane</keyword>
<keyword id="KW-1133">Transmembrane helix</keyword>
<comment type="function">
    <text evidence="1">Essential cell division protein. May link together the upstream cell division proteins, which are predominantly cytoplasmic, with the downstream cell division proteins, which are predominantly periplasmic.</text>
</comment>
<comment type="subunit">
    <text evidence="1">Part of a complex composed of FtsB, FtsL and FtsQ.</text>
</comment>
<comment type="subcellular location">
    <subcellularLocation>
        <location evidence="1">Cell inner membrane</location>
        <topology evidence="1">Single-pass type II membrane protein</topology>
    </subcellularLocation>
    <text evidence="1">Localizes to the division septum.</text>
</comment>
<comment type="similarity">
    <text evidence="1">Belongs to the FtsB family.</text>
</comment>
<reference key="1">
    <citation type="journal article" date="2011" name="J. Bacteriol.">
        <title>Comparative genomics of 28 Salmonella enterica isolates: evidence for CRISPR-mediated adaptive sublineage evolution.</title>
        <authorList>
            <person name="Fricke W.F."/>
            <person name="Mammel M.K."/>
            <person name="McDermott P.F."/>
            <person name="Tartera C."/>
            <person name="White D.G."/>
            <person name="Leclerc J.E."/>
            <person name="Ravel J."/>
            <person name="Cebula T.A."/>
        </authorList>
    </citation>
    <scope>NUCLEOTIDE SEQUENCE [LARGE SCALE GENOMIC DNA]</scope>
    <source>
        <strain>SL476</strain>
    </source>
</reference>
<sequence length="103" mass="11575">MGKLTLLLLALLVWLQYSLWFGKNGIHDYSRVNDDVVAQQATNAKLKARNDQLFAEIDDLNGGQEAIEERARNELSMTKPGETFYRLVPDASKRAATAGQTHR</sequence>
<name>FTSB_SALHS</name>
<accession>B4TFW8</accession>
<proteinExistence type="inferred from homology"/>
<feature type="chain" id="PRO_1000129941" description="Cell division protein FtsB">
    <location>
        <begin position="1"/>
        <end position="103"/>
    </location>
</feature>
<feature type="topological domain" description="Cytoplasmic" evidence="1">
    <location>
        <begin position="1"/>
        <end position="3"/>
    </location>
</feature>
<feature type="transmembrane region" description="Helical" evidence="1">
    <location>
        <begin position="4"/>
        <end position="21"/>
    </location>
</feature>
<feature type="topological domain" description="Periplasmic" evidence="1">
    <location>
        <begin position="22"/>
        <end position="103"/>
    </location>
</feature>
<feature type="coiled-coil region" evidence="1">
    <location>
        <begin position="33"/>
        <end position="62"/>
    </location>
</feature>
<dbReference type="EMBL" id="CP001120">
    <property type="protein sequence ID" value="ACF67444.1"/>
    <property type="molecule type" value="Genomic_DNA"/>
</dbReference>
<dbReference type="RefSeq" id="WP_000517480.1">
    <property type="nucleotide sequence ID" value="NC_011083.1"/>
</dbReference>
<dbReference type="SMR" id="B4TFW8"/>
<dbReference type="KEGG" id="seh:SeHA_C3121"/>
<dbReference type="HOGENOM" id="CLU_134863_5_2_6"/>
<dbReference type="Proteomes" id="UP000001866">
    <property type="component" value="Chromosome"/>
</dbReference>
<dbReference type="GO" id="GO:0032153">
    <property type="term" value="C:cell division site"/>
    <property type="evidence" value="ECO:0007669"/>
    <property type="project" value="UniProtKB-UniRule"/>
</dbReference>
<dbReference type="GO" id="GO:0030428">
    <property type="term" value="C:cell septum"/>
    <property type="evidence" value="ECO:0007669"/>
    <property type="project" value="TreeGrafter"/>
</dbReference>
<dbReference type="GO" id="GO:0005886">
    <property type="term" value="C:plasma membrane"/>
    <property type="evidence" value="ECO:0007669"/>
    <property type="project" value="UniProtKB-SubCell"/>
</dbReference>
<dbReference type="GO" id="GO:0043093">
    <property type="term" value="P:FtsZ-dependent cytokinesis"/>
    <property type="evidence" value="ECO:0007669"/>
    <property type="project" value="UniProtKB-UniRule"/>
</dbReference>
<dbReference type="FunFam" id="1.20.5.400:FF:000001">
    <property type="entry name" value="Cell division protein FtsB"/>
    <property type="match status" value="1"/>
</dbReference>
<dbReference type="Gene3D" id="1.20.5.400">
    <property type="match status" value="1"/>
</dbReference>
<dbReference type="HAMAP" id="MF_00599">
    <property type="entry name" value="FtsB"/>
    <property type="match status" value="1"/>
</dbReference>
<dbReference type="InterPro" id="IPR023081">
    <property type="entry name" value="Cell_div_FtsB"/>
</dbReference>
<dbReference type="InterPro" id="IPR007060">
    <property type="entry name" value="FtsL/DivIC"/>
</dbReference>
<dbReference type="NCBIfam" id="NF002058">
    <property type="entry name" value="PRK00888.1"/>
    <property type="match status" value="1"/>
</dbReference>
<dbReference type="PANTHER" id="PTHR37485">
    <property type="entry name" value="CELL DIVISION PROTEIN FTSB"/>
    <property type="match status" value="1"/>
</dbReference>
<dbReference type="PANTHER" id="PTHR37485:SF1">
    <property type="entry name" value="CELL DIVISION PROTEIN FTSB"/>
    <property type="match status" value="1"/>
</dbReference>
<dbReference type="Pfam" id="PF04977">
    <property type="entry name" value="DivIC"/>
    <property type="match status" value="1"/>
</dbReference>
<organism>
    <name type="scientific">Salmonella heidelberg (strain SL476)</name>
    <dbReference type="NCBI Taxonomy" id="454169"/>
    <lineage>
        <taxon>Bacteria</taxon>
        <taxon>Pseudomonadati</taxon>
        <taxon>Pseudomonadota</taxon>
        <taxon>Gammaproteobacteria</taxon>
        <taxon>Enterobacterales</taxon>
        <taxon>Enterobacteriaceae</taxon>
        <taxon>Salmonella</taxon>
    </lineage>
</organism>
<protein>
    <recommendedName>
        <fullName evidence="1">Cell division protein FtsB</fullName>
    </recommendedName>
</protein>
<gene>
    <name evidence="1" type="primary">ftsB</name>
    <name type="ordered locus">SeHA_C3121</name>
</gene>